<dbReference type="EMBL" id="AY363224">
    <property type="protein sequence ID" value="AAQ63484.1"/>
    <property type="molecule type" value="mRNA"/>
</dbReference>
<dbReference type="RefSeq" id="NP_001001601.1">
    <property type="nucleotide sequence ID" value="NM_001001601.1"/>
</dbReference>
<dbReference type="SMR" id="Q6URK6"/>
<dbReference type="CORUM" id="Q6URK6"/>
<dbReference type="DIP" id="DIP-48767N"/>
<dbReference type="FunCoup" id="Q6URK6">
    <property type="interactions" value="543"/>
</dbReference>
<dbReference type="IntAct" id="Q6URK6">
    <property type="interactions" value="1"/>
</dbReference>
<dbReference type="STRING" id="9913.ENSBTAP00000055011"/>
<dbReference type="GlyCosmos" id="Q6URK6">
    <property type="glycosylation" value="5 sites, No reported glycans"/>
</dbReference>
<dbReference type="GlyGen" id="Q6URK6">
    <property type="glycosylation" value="5 sites"/>
</dbReference>
<dbReference type="PaxDb" id="9913-ENSBTAP00000009760"/>
<dbReference type="GeneID" id="414735"/>
<dbReference type="KEGG" id="bta:414735"/>
<dbReference type="CTD" id="1003"/>
<dbReference type="eggNOG" id="KOG3594">
    <property type="taxonomic scope" value="Eukaryota"/>
</dbReference>
<dbReference type="InParanoid" id="Q6URK6"/>
<dbReference type="OrthoDB" id="6252479at2759"/>
<dbReference type="Proteomes" id="UP000009136">
    <property type="component" value="Unplaced"/>
</dbReference>
<dbReference type="GO" id="GO:0005912">
    <property type="term" value="C:adherens junction"/>
    <property type="evidence" value="ECO:0000250"/>
    <property type="project" value="UniProtKB"/>
</dbReference>
<dbReference type="GO" id="GO:0005923">
    <property type="term" value="C:bicellular tight junction"/>
    <property type="evidence" value="ECO:0000318"/>
    <property type="project" value="GO_Central"/>
</dbReference>
<dbReference type="GO" id="GO:0016342">
    <property type="term" value="C:catenin complex"/>
    <property type="evidence" value="ECO:0000318"/>
    <property type="project" value="GO_Central"/>
</dbReference>
<dbReference type="GO" id="GO:0030054">
    <property type="term" value="C:cell junction"/>
    <property type="evidence" value="ECO:0000250"/>
    <property type="project" value="UniProtKB"/>
</dbReference>
<dbReference type="GO" id="GO:0005737">
    <property type="term" value="C:cytoplasm"/>
    <property type="evidence" value="ECO:0000250"/>
    <property type="project" value="UniProtKB"/>
</dbReference>
<dbReference type="GO" id="GO:0008013">
    <property type="term" value="F:beta-catenin binding"/>
    <property type="evidence" value="ECO:0000318"/>
    <property type="project" value="GO_Central"/>
</dbReference>
<dbReference type="GO" id="GO:0045296">
    <property type="term" value="F:cadherin binding"/>
    <property type="evidence" value="ECO:0000318"/>
    <property type="project" value="GO_Central"/>
</dbReference>
<dbReference type="GO" id="GO:0005509">
    <property type="term" value="F:calcium ion binding"/>
    <property type="evidence" value="ECO:0007669"/>
    <property type="project" value="InterPro"/>
</dbReference>
<dbReference type="GO" id="GO:0019903">
    <property type="term" value="F:protein phosphatase binding"/>
    <property type="evidence" value="ECO:0000318"/>
    <property type="project" value="GO_Central"/>
</dbReference>
<dbReference type="GO" id="GO:0034332">
    <property type="term" value="P:adherens junction organization"/>
    <property type="evidence" value="ECO:0000318"/>
    <property type="project" value="GO_Central"/>
</dbReference>
<dbReference type="GO" id="GO:0016339">
    <property type="term" value="P:calcium-dependent cell-cell adhesion via plasma membrane cell adhesion molecules"/>
    <property type="evidence" value="ECO:0000318"/>
    <property type="project" value="GO_Central"/>
</dbReference>
<dbReference type="GO" id="GO:0016477">
    <property type="term" value="P:cell migration"/>
    <property type="evidence" value="ECO:0000318"/>
    <property type="project" value="GO_Central"/>
</dbReference>
<dbReference type="GO" id="GO:0000902">
    <property type="term" value="P:cell morphogenesis"/>
    <property type="evidence" value="ECO:0000318"/>
    <property type="project" value="GO_Central"/>
</dbReference>
<dbReference type="GO" id="GO:0044331">
    <property type="term" value="P:cell-cell adhesion mediated by cadherin"/>
    <property type="evidence" value="ECO:0000318"/>
    <property type="project" value="GO_Central"/>
</dbReference>
<dbReference type="GO" id="GO:0007043">
    <property type="term" value="P:cell-cell junction assembly"/>
    <property type="evidence" value="ECO:0000318"/>
    <property type="project" value="GO_Central"/>
</dbReference>
<dbReference type="GO" id="GO:0001886">
    <property type="term" value="P:endothelial cell morphogenesis"/>
    <property type="evidence" value="ECO:0000250"/>
    <property type="project" value="UniProtKB"/>
</dbReference>
<dbReference type="GO" id="GO:0007156">
    <property type="term" value="P:homophilic cell adhesion via plasma membrane adhesion molecules"/>
    <property type="evidence" value="ECO:0007669"/>
    <property type="project" value="InterPro"/>
</dbReference>
<dbReference type="GO" id="GO:2000114">
    <property type="term" value="P:regulation of establishment of cell polarity"/>
    <property type="evidence" value="ECO:0000250"/>
    <property type="project" value="UniProtKB"/>
</dbReference>
<dbReference type="CDD" id="cd11304">
    <property type="entry name" value="Cadherin_repeat"/>
    <property type="match status" value="5"/>
</dbReference>
<dbReference type="FunFam" id="2.60.40.60:FF:000012">
    <property type="entry name" value="Cadherin 24"/>
    <property type="match status" value="1"/>
</dbReference>
<dbReference type="FunFam" id="2.60.40.60:FF:000017">
    <property type="entry name" value="Cadherin 24"/>
    <property type="match status" value="1"/>
</dbReference>
<dbReference type="FunFam" id="2.60.40.60:FF:000217">
    <property type="entry name" value="Cadherin 5"/>
    <property type="match status" value="1"/>
</dbReference>
<dbReference type="FunFam" id="2.60.40.60:FF:000219">
    <property type="entry name" value="Cadherin 5"/>
    <property type="match status" value="1"/>
</dbReference>
<dbReference type="FunFam" id="4.10.900.10:FF:000008">
    <property type="entry name" value="Cadherin 5"/>
    <property type="match status" value="1"/>
</dbReference>
<dbReference type="FunFam" id="2.60.40.60:FF:000014">
    <property type="entry name" value="Cadherin 8"/>
    <property type="match status" value="1"/>
</dbReference>
<dbReference type="Gene3D" id="2.60.40.60">
    <property type="entry name" value="Cadherins"/>
    <property type="match status" value="5"/>
</dbReference>
<dbReference type="Gene3D" id="4.10.900.10">
    <property type="entry name" value="TCF3-CBD (Catenin binding domain)"/>
    <property type="match status" value="1"/>
</dbReference>
<dbReference type="InterPro" id="IPR039808">
    <property type="entry name" value="Cadherin"/>
</dbReference>
<dbReference type="InterPro" id="IPR002126">
    <property type="entry name" value="Cadherin-like_dom"/>
</dbReference>
<dbReference type="InterPro" id="IPR015919">
    <property type="entry name" value="Cadherin-like_sf"/>
</dbReference>
<dbReference type="InterPro" id="IPR020894">
    <property type="entry name" value="Cadherin_CS"/>
</dbReference>
<dbReference type="InterPro" id="IPR000233">
    <property type="entry name" value="Cadherin_Y-type_LIR"/>
</dbReference>
<dbReference type="InterPro" id="IPR027397">
    <property type="entry name" value="Catenin-bd_sf"/>
</dbReference>
<dbReference type="PANTHER" id="PTHR24027">
    <property type="entry name" value="CADHERIN-23"/>
    <property type="match status" value="1"/>
</dbReference>
<dbReference type="PANTHER" id="PTHR24027:SF89">
    <property type="entry name" value="CADHERIN-5"/>
    <property type="match status" value="1"/>
</dbReference>
<dbReference type="Pfam" id="PF01049">
    <property type="entry name" value="CADH_Y-type_LIR"/>
    <property type="match status" value="1"/>
</dbReference>
<dbReference type="Pfam" id="PF00028">
    <property type="entry name" value="Cadherin"/>
    <property type="match status" value="5"/>
</dbReference>
<dbReference type="PRINTS" id="PR00205">
    <property type="entry name" value="CADHERIN"/>
</dbReference>
<dbReference type="SMART" id="SM00112">
    <property type="entry name" value="CA"/>
    <property type="match status" value="5"/>
</dbReference>
<dbReference type="SUPFAM" id="SSF49313">
    <property type="entry name" value="Cadherin-like"/>
    <property type="match status" value="5"/>
</dbReference>
<dbReference type="PROSITE" id="PS00232">
    <property type="entry name" value="CADHERIN_1"/>
    <property type="match status" value="3"/>
</dbReference>
<dbReference type="PROSITE" id="PS50268">
    <property type="entry name" value="CADHERIN_2"/>
    <property type="match status" value="5"/>
</dbReference>
<keyword id="KW-0106">Calcium</keyword>
<keyword id="KW-0130">Cell adhesion</keyword>
<keyword id="KW-0965">Cell junction</keyword>
<keyword id="KW-1003">Cell membrane</keyword>
<keyword id="KW-0165">Cleavage on pair of basic residues</keyword>
<keyword id="KW-0963">Cytoplasm</keyword>
<keyword id="KW-0325">Glycoprotein</keyword>
<keyword id="KW-0472">Membrane</keyword>
<keyword id="KW-0479">Metal-binding</keyword>
<keyword id="KW-0597">Phosphoprotein</keyword>
<keyword id="KW-1185">Reference proteome</keyword>
<keyword id="KW-0677">Repeat</keyword>
<keyword id="KW-0732">Signal</keyword>
<keyword id="KW-0812">Transmembrane</keyword>
<keyword id="KW-1133">Transmembrane helix</keyword>
<evidence type="ECO:0000250" key="1"/>
<evidence type="ECO:0000250" key="2">
    <source>
        <dbReference type="UniProtKB" id="P33151"/>
    </source>
</evidence>
<evidence type="ECO:0000250" key="3">
    <source>
        <dbReference type="UniProtKB" id="P55284"/>
    </source>
</evidence>
<evidence type="ECO:0000250" key="4">
    <source>
        <dbReference type="UniProtKB" id="Q8AYD0"/>
    </source>
</evidence>
<evidence type="ECO:0000255" key="5"/>
<evidence type="ECO:0000255" key="6">
    <source>
        <dbReference type="PROSITE-ProRule" id="PRU00043"/>
    </source>
</evidence>
<evidence type="ECO:0000269" key="7">
    <source>
    </source>
</evidence>
<gene>
    <name evidence="2" type="primary">CDH5</name>
</gene>
<organism>
    <name type="scientific">Bos taurus</name>
    <name type="common">Bovine</name>
    <dbReference type="NCBI Taxonomy" id="9913"/>
    <lineage>
        <taxon>Eukaryota</taxon>
        <taxon>Metazoa</taxon>
        <taxon>Chordata</taxon>
        <taxon>Craniata</taxon>
        <taxon>Vertebrata</taxon>
        <taxon>Euteleostomi</taxon>
        <taxon>Mammalia</taxon>
        <taxon>Eutheria</taxon>
        <taxon>Laurasiatheria</taxon>
        <taxon>Artiodactyla</taxon>
        <taxon>Ruminantia</taxon>
        <taxon>Pecora</taxon>
        <taxon>Bovidae</taxon>
        <taxon>Bovinae</taxon>
        <taxon>Bos</taxon>
    </lineage>
</organism>
<sequence>MQALVMLLATGATYYLGLLAAAAAAVNPGRPNTPGSLPAHRRQKRDWIWNQMHIDEERNDSLPHYVGKIKSSVDPKKTEYQLRGESAGKVFRVDKNTGDVYALERLDREKISEYHLTALVVDKDSKKNLESPSSFTIKVHDVNDNWPVFTHRVFNASVPEMSGIGTSVIQVTAMDADDPTVADHASVVYQLTKGKENFDIRGSGLIVTMNKHLDRETQDKYEVVVKAEDAQGRRGESGTATVFITLQDVNDNFPIFTQNRYTFSVPEDIRVGSPLGSLFVEDPDEPQNRKTKYSFVQGEYRDTFTIDTDPSHNEGIIKPIKPLDYERIRQYSFTIEATDPTIDLRYLGSTSPKNIARVIINVTDVDEPPIFQQPFYHFQLQENQKKPLIGSVLAKDPDAAQRDIRYSIRRTSDKGQFFGITKKGGIYNDKELDREVYPWYNLTVEAKEVDLSGTPTGKESIVQVHIEVMDENDNAPEFAKPYEPKVCENAPQGKLVVQISATDKDITPRDVKFKFSLSTEDSNFTLIDNHDNTANIIVKYGYFDRERAKVHHLPVLISDNGRPSLTGTSTLHVTVCKCNEHGEFTLCEEAAAQVGISIQALVAIFLCILTFTVITLLIILRRRLRKQARAHGKSVPEIHEQLVTYDEEGGGEMDTTSYDVSVLNSARHGGAKPPRPALDARPSLYAQVQKPPRQAPGAHAPGEMAAMIGVKKDEADHDGGGPPYDTLHIYGYEGAESIAESLSSLGTDSSDSDIDYDFLNDWGTRFKMLAELYGSDPQEELVY</sequence>
<feature type="signal peptide" evidence="5">
    <location>
        <begin position="1"/>
        <end position="25"/>
    </location>
</feature>
<feature type="propeptide" id="PRO_0000247562" evidence="5">
    <location>
        <begin position="26"/>
        <end position="45"/>
    </location>
</feature>
<feature type="chain" id="PRO_0000247563" description="Cadherin-5">
    <location>
        <begin position="46"/>
        <end position="783"/>
    </location>
</feature>
<feature type="topological domain" description="Extracellular" evidence="5">
    <location>
        <begin position="46"/>
        <end position="599"/>
    </location>
</feature>
<feature type="transmembrane region" description="Helical" evidence="5">
    <location>
        <begin position="600"/>
        <end position="620"/>
    </location>
</feature>
<feature type="topological domain" description="Cytoplasmic" evidence="5">
    <location>
        <begin position="621"/>
        <end position="783"/>
    </location>
</feature>
<feature type="domain" description="Cadherin 1" evidence="6">
    <location>
        <begin position="44"/>
        <end position="149"/>
    </location>
</feature>
<feature type="domain" description="Cadherin 2" evidence="6">
    <location>
        <begin position="150"/>
        <end position="256"/>
    </location>
</feature>
<feature type="domain" description="Cadherin 3" evidence="6">
    <location>
        <begin position="257"/>
        <end position="371"/>
    </location>
</feature>
<feature type="domain" description="Cadherin 4" evidence="6">
    <location>
        <begin position="372"/>
        <end position="478"/>
    </location>
</feature>
<feature type="domain" description="Cadherin 5" evidence="6">
    <location>
        <begin position="478"/>
        <end position="585"/>
    </location>
</feature>
<feature type="region of interest" description="Required for interaction with PALS1" evidence="3">
    <location>
        <begin position="621"/>
        <end position="660"/>
    </location>
</feature>
<feature type="binding site" evidence="4">
    <location>
        <position position="56"/>
    </location>
    <ligand>
        <name>Ca(2+)</name>
        <dbReference type="ChEBI" id="CHEBI:29108"/>
        <label>1</label>
    </ligand>
</feature>
<feature type="binding site" evidence="4">
    <location>
        <position position="56"/>
    </location>
    <ligand>
        <name>Ca(2+)</name>
        <dbReference type="ChEBI" id="CHEBI:29108"/>
        <label>2</label>
    </ligand>
</feature>
<feature type="binding site" evidence="4">
    <location>
        <position position="57"/>
    </location>
    <ligand>
        <name>Ca(2+)</name>
        <dbReference type="ChEBI" id="CHEBI:29108"/>
        <label>1</label>
    </ligand>
</feature>
<feature type="binding site" evidence="4">
    <location>
        <position position="107"/>
    </location>
    <ligand>
        <name>Ca(2+)</name>
        <dbReference type="ChEBI" id="CHEBI:29108"/>
        <label>1</label>
    </ligand>
</feature>
<feature type="binding site" evidence="4">
    <location>
        <position position="109"/>
    </location>
    <ligand>
        <name>Ca(2+)</name>
        <dbReference type="ChEBI" id="CHEBI:29108"/>
        <label>1</label>
    </ligand>
</feature>
<feature type="binding site" evidence="4">
    <location>
        <position position="109"/>
    </location>
    <ligand>
        <name>Ca(2+)</name>
        <dbReference type="ChEBI" id="CHEBI:29108"/>
        <label>2</label>
    </ligand>
</feature>
<feature type="binding site" evidence="4">
    <location>
        <position position="141"/>
    </location>
    <ligand>
        <name>Ca(2+)</name>
        <dbReference type="ChEBI" id="CHEBI:29108"/>
        <label>2</label>
    </ligand>
</feature>
<feature type="binding site" evidence="4">
    <location>
        <position position="142"/>
    </location>
    <ligand>
        <name>Ca(2+)</name>
        <dbReference type="ChEBI" id="CHEBI:29108"/>
        <label>2</label>
    </ligand>
</feature>
<feature type="binding site" evidence="4">
    <location>
        <position position="143"/>
    </location>
    <ligand>
        <name>Ca(2+)</name>
        <dbReference type="ChEBI" id="CHEBI:29108"/>
        <label>3</label>
    </ligand>
</feature>
<feature type="binding site" evidence="4">
    <location>
        <position position="144"/>
    </location>
    <ligand>
        <name>Ca(2+)</name>
        <dbReference type="ChEBI" id="CHEBI:29108"/>
        <label>1</label>
    </ligand>
</feature>
<feature type="binding site" evidence="4">
    <location>
        <position position="144"/>
    </location>
    <ligand>
        <name>Ca(2+)</name>
        <dbReference type="ChEBI" id="CHEBI:29108"/>
        <label>2</label>
    </ligand>
</feature>
<feature type="binding site" evidence="4">
    <location>
        <position position="145"/>
    </location>
    <ligand>
        <name>Ca(2+)</name>
        <dbReference type="ChEBI" id="CHEBI:29108"/>
        <label>3</label>
    </ligand>
</feature>
<feature type="binding site" evidence="4">
    <location>
        <position position="175"/>
    </location>
    <ligand>
        <name>Ca(2+)</name>
        <dbReference type="ChEBI" id="CHEBI:29108"/>
        <label>3</label>
    </ligand>
</feature>
<feature type="binding site" evidence="4">
    <location>
        <position position="177"/>
    </location>
    <ligand>
        <name>Ca(2+)</name>
        <dbReference type="ChEBI" id="CHEBI:29108"/>
        <label>2</label>
    </ligand>
</feature>
<feature type="binding site" evidence="4">
    <location>
        <position position="177"/>
    </location>
    <ligand>
        <name>Ca(2+)</name>
        <dbReference type="ChEBI" id="CHEBI:29108"/>
        <label>3</label>
    </ligand>
</feature>
<feature type="binding site" evidence="4">
    <location>
        <position position="184"/>
    </location>
    <ligand>
        <name>Ca(2+)</name>
        <dbReference type="ChEBI" id="CHEBI:29108"/>
        <label>3</label>
    </ligand>
</feature>
<feature type="binding site" evidence="4">
    <location>
        <position position="229"/>
    </location>
    <ligand>
        <name>Ca(2+)</name>
        <dbReference type="ChEBI" id="CHEBI:29108"/>
        <label>3</label>
    </ligand>
</feature>
<feature type="glycosylation site" description="N-linked (GlcNAc...) asparagine" evidence="5">
    <location>
        <position position="59"/>
    </location>
</feature>
<feature type="glycosylation site" description="N-linked (GlcNAc...) asparagine" evidence="5">
    <location>
        <position position="155"/>
    </location>
</feature>
<feature type="glycosylation site" description="N-linked (GlcNAc...) asparagine" evidence="5">
    <location>
        <position position="361"/>
    </location>
</feature>
<feature type="glycosylation site" description="N-linked (GlcNAc...) asparagine" evidence="5">
    <location>
        <position position="441"/>
    </location>
</feature>
<feature type="glycosylation site" description="N-linked (GlcNAc...) asparagine" evidence="5">
    <location>
        <position position="523"/>
    </location>
</feature>
<protein>
    <recommendedName>
        <fullName evidence="2">Cadherin-5</fullName>
    </recommendedName>
    <alternativeName>
        <fullName evidence="2">Vascular endothelial cadherin</fullName>
        <shortName evidence="2">VE-cadherin</shortName>
    </alternativeName>
    <cdAntigenName>CD144</cdAntigenName>
</protein>
<name>CADH5_BOVIN</name>
<proteinExistence type="evidence at transcript level"/>
<reference key="1">
    <citation type="journal article" date="2004" name="Am. J. Physiol.">
        <title>VE-cadherin-p120 interaction is required for maintenance of endothelial barrier function.</title>
        <authorList>
            <person name="Iyer S."/>
            <person name="Ferreri D.M."/>
            <person name="DeCocco N.C."/>
            <person name="Minnear F.L."/>
            <person name="Vincent P.A."/>
        </authorList>
    </citation>
    <scope>NUCLEOTIDE SEQUENCE [MRNA]</scope>
    <scope>SUBCELLULAR LOCATION</scope>
</reference>
<comment type="function">
    <text evidence="2 3 4">Cadherins are calcium-dependent cell adhesion proteins (By similarity). They preferentially interact with themselves in a homophilic manner in connecting cells; cadherins may thus contribute to the sorting of heterogeneous cell types (By similarity). This cadherin may play a important role in endothelial cell biology through control of the cohesion and organization of the intercellular junctions (By similarity). It associates with alpha-catenin forming a link to the cytoskeleton (By similarity). Plays a role in coupling actin fibers to cell junctions in endothelial cells, via acting as a cell junctional complex anchor for AMOTL2 and MAGI1 (By similarity). Acts in concert with KRIT1 and PALS1 to establish and maintain correct endothelial cell polarity and vascular lumen (By similarity). These effects are mediated by recruitment and activation of the Par polarity complex and RAP1B (By similarity). Required for activation of PRKCZ and for localization of phosphorylated PRKCZ, PARD3, TIAM1 and RAP1B to the cell junction (By similarity). Associates with CTNND1/p120-catenin to control CADH5 endocytosis (By similarity).</text>
</comment>
<comment type="subunit">
    <text evidence="2 3">Part of a complex composed of AMOTL2, MAGI1 and CDH5, within the complex AMOTL2 acts as a scaffold protein for the interaction of MAGI1 with CDH5 (By similarity). The complex is required for coupling actin fibers to cell junctions in endothelial cells (By similarity). Within the complex AMOTL2 (via its N-terminus) interacts with CDH5 (By similarity). Interacts (via cadherin 5 domain) with PTPRB (By similarity). Interacts with TRPC4 (By similarity). Interacts with KRIT1 (By similarity). Interacts with PARD3 (By similarity). Interacts with RTN4 (isoform B) (By similarity). Interacts with PALS1; the interaction promotes PALS1 localization to cell junctions and is required for CDH5-mediated vascular lumen formation and endothelial cell (By similarity). Interacts with CTNND1/p120-catenin; the interaction controls CADH5 endocytosis (By similarity).</text>
</comment>
<comment type="subcellular location">
    <subcellularLocation>
        <location evidence="7">Cell junction</location>
        <location evidence="7">Adherens junction</location>
    </subcellularLocation>
    <subcellularLocation>
        <location evidence="7">Cell membrane</location>
        <topology evidence="5">Single-pass type I membrane protein</topology>
    </subcellularLocation>
    <subcellularLocation>
        <location evidence="3">Cytoplasm</location>
    </subcellularLocation>
    <text evidence="2">Found at cell-cell boundaries and probably at cell-matrix boundaries. KRIT1 and CDH5 reciprocally regulate their localization to endothelial cell-cell junctions.</text>
</comment>
<comment type="domain">
    <text evidence="1">Three calcium ions are usually bound at the interface of each cadherin domain and rigidify the connections, imparting a strong curvature to the full-length ectodomain.</text>
</comment>
<comment type="PTM">
    <text evidence="1">Phosphorylated on tyrosine residues by KDR/VEGFR-2. Dephosphorylated by PTPRB (By similarity).</text>
</comment>
<comment type="PTM">
    <text evidence="1">O-glycosylated.</text>
</comment>
<accession>Q6URK6</accession>